<gene>
    <name evidence="1" type="primary">tyrS</name>
    <name type="ordered locus">XF_0169</name>
</gene>
<evidence type="ECO:0000255" key="1">
    <source>
        <dbReference type="HAMAP-Rule" id="MF_02007"/>
    </source>
</evidence>
<protein>
    <recommendedName>
        <fullName evidence="1">Tyrosine--tRNA ligase</fullName>
        <ecNumber evidence="1">6.1.1.1</ecNumber>
    </recommendedName>
    <alternativeName>
        <fullName evidence="1">Tyrosyl-tRNA synthetase</fullName>
        <shortName evidence="1">TyrRS</shortName>
    </alternativeName>
</protein>
<feature type="chain" id="PRO_0000236787" description="Tyrosine--tRNA ligase">
    <location>
        <begin position="1"/>
        <end position="418"/>
    </location>
</feature>
<feature type="domain" description="S4 RNA-binding" evidence="1">
    <location>
        <begin position="339"/>
        <end position="400"/>
    </location>
</feature>
<feature type="short sequence motif" description="'HIGH' region">
    <location>
        <begin position="42"/>
        <end position="51"/>
    </location>
</feature>
<feature type="short sequence motif" description="'KMSKS' region">
    <location>
        <begin position="226"/>
        <end position="230"/>
    </location>
</feature>
<feature type="binding site" evidence="1">
    <location>
        <position position="229"/>
    </location>
    <ligand>
        <name>ATP</name>
        <dbReference type="ChEBI" id="CHEBI:30616"/>
    </ligand>
</feature>
<keyword id="KW-0030">Aminoacyl-tRNA synthetase</keyword>
<keyword id="KW-0067">ATP-binding</keyword>
<keyword id="KW-0963">Cytoplasm</keyword>
<keyword id="KW-0436">Ligase</keyword>
<keyword id="KW-0547">Nucleotide-binding</keyword>
<keyword id="KW-0648">Protein biosynthesis</keyword>
<keyword id="KW-0694">RNA-binding</keyword>
<organism>
    <name type="scientific">Xylella fastidiosa (strain 9a5c)</name>
    <dbReference type="NCBI Taxonomy" id="160492"/>
    <lineage>
        <taxon>Bacteria</taxon>
        <taxon>Pseudomonadati</taxon>
        <taxon>Pseudomonadota</taxon>
        <taxon>Gammaproteobacteria</taxon>
        <taxon>Lysobacterales</taxon>
        <taxon>Lysobacteraceae</taxon>
        <taxon>Xylella</taxon>
    </lineage>
</organism>
<proteinExistence type="inferred from homology"/>
<comment type="function">
    <text evidence="1">Catalyzes the attachment of tyrosine to tRNA(Tyr) in a two-step reaction: tyrosine is first activated by ATP to form Tyr-AMP and then transferred to the acceptor end of tRNA(Tyr).</text>
</comment>
<comment type="catalytic activity">
    <reaction evidence="1">
        <text>tRNA(Tyr) + L-tyrosine + ATP = L-tyrosyl-tRNA(Tyr) + AMP + diphosphate + H(+)</text>
        <dbReference type="Rhea" id="RHEA:10220"/>
        <dbReference type="Rhea" id="RHEA-COMP:9706"/>
        <dbReference type="Rhea" id="RHEA-COMP:9707"/>
        <dbReference type="ChEBI" id="CHEBI:15378"/>
        <dbReference type="ChEBI" id="CHEBI:30616"/>
        <dbReference type="ChEBI" id="CHEBI:33019"/>
        <dbReference type="ChEBI" id="CHEBI:58315"/>
        <dbReference type="ChEBI" id="CHEBI:78442"/>
        <dbReference type="ChEBI" id="CHEBI:78536"/>
        <dbReference type="ChEBI" id="CHEBI:456215"/>
        <dbReference type="EC" id="6.1.1.1"/>
    </reaction>
</comment>
<comment type="subunit">
    <text evidence="1">Homodimer.</text>
</comment>
<comment type="subcellular location">
    <subcellularLocation>
        <location evidence="1">Cytoplasm</location>
    </subcellularLocation>
</comment>
<comment type="similarity">
    <text evidence="1">Belongs to the class-I aminoacyl-tRNA synthetase family. TyrS type 2 subfamily.</text>
</comment>
<accession>Q9PGX7</accession>
<dbReference type="EC" id="6.1.1.1" evidence="1"/>
<dbReference type="EMBL" id="AE003849">
    <property type="protein sequence ID" value="AAF82982.1"/>
    <property type="molecule type" value="Genomic_DNA"/>
</dbReference>
<dbReference type="PIR" id="E82840">
    <property type="entry name" value="E82840"/>
</dbReference>
<dbReference type="RefSeq" id="WP_010892714.1">
    <property type="nucleotide sequence ID" value="NC_002488.3"/>
</dbReference>
<dbReference type="SMR" id="Q9PGX7"/>
<dbReference type="STRING" id="160492.XF_0169"/>
<dbReference type="KEGG" id="xfa:XF_0169"/>
<dbReference type="eggNOG" id="COG0162">
    <property type="taxonomic scope" value="Bacteria"/>
</dbReference>
<dbReference type="HOGENOM" id="CLU_024003_5_0_6"/>
<dbReference type="Proteomes" id="UP000000812">
    <property type="component" value="Chromosome"/>
</dbReference>
<dbReference type="GO" id="GO:0005829">
    <property type="term" value="C:cytosol"/>
    <property type="evidence" value="ECO:0007669"/>
    <property type="project" value="TreeGrafter"/>
</dbReference>
<dbReference type="GO" id="GO:0005524">
    <property type="term" value="F:ATP binding"/>
    <property type="evidence" value="ECO:0007669"/>
    <property type="project" value="UniProtKB-UniRule"/>
</dbReference>
<dbReference type="GO" id="GO:0003723">
    <property type="term" value="F:RNA binding"/>
    <property type="evidence" value="ECO:0007669"/>
    <property type="project" value="UniProtKB-KW"/>
</dbReference>
<dbReference type="GO" id="GO:0004831">
    <property type="term" value="F:tyrosine-tRNA ligase activity"/>
    <property type="evidence" value="ECO:0007669"/>
    <property type="project" value="UniProtKB-UniRule"/>
</dbReference>
<dbReference type="GO" id="GO:0006437">
    <property type="term" value="P:tyrosyl-tRNA aminoacylation"/>
    <property type="evidence" value="ECO:0007669"/>
    <property type="project" value="UniProtKB-UniRule"/>
</dbReference>
<dbReference type="CDD" id="cd00165">
    <property type="entry name" value="S4"/>
    <property type="match status" value="1"/>
</dbReference>
<dbReference type="CDD" id="cd00805">
    <property type="entry name" value="TyrRS_core"/>
    <property type="match status" value="1"/>
</dbReference>
<dbReference type="FunFam" id="3.40.50.620:FF:000061">
    <property type="entry name" value="Tyrosine--tRNA ligase"/>
    <property type="match status" value="1"/>
</dbReference>
<dbReference type="Gene3D" id="3.40.50.620">
    <property type="entry name" value="HUPs"/>
    <property type="match status" value="1"/>
</dbReference>
<dbReference type="Gene3D" id="3.10.290.10">
    <property type="entry name" value="RNA-binding S4 domain"/>
    <property type="match status" value="1"/>
</dbReference>
<dbReference type="Gene3D" id="1.10.240.10">
    <property type="entry name" value="Tyrosyl-Transfer RNA Synthetase"/>
    <property type="match status" value="1"/>
</dbReference>
<dbReference type="HAMAP" id="MF_02007">
    <property type="entry name" value="Tyr_tRNA_synth_type2"/>
    <property type="match status" value="1"/>
</dbReference>
<dbReference type="InterPro" id="IPR001412">
    <property type="entry name" value="aa-tRNA-synth_I_CS"/>
</dbReference>
<dbReference type="InterPro" id="IPR002305">
    <property type="entry name" value="aa-tRNA-synth_Ic"/>
</dbReference>
<dbReference type="InterPro" id="IPR014729">
    <property type="entry name" value="Rossmann-like_a/b/a_fold"/>
</dbReference>
<dbReference type="InterPro" id="IPR036986">
    <property type="entry name" value="S4_RNA-bd_sf"/>
</dbReference>
<dbReference type="InterPro" id="IPR002307">
    <property type="entry name" value="Tyr-tRNA-ligase"/>
</dbReference>
<dbReference type="InterPro" id="IPR024088">
    <property type="entry name" value="Tyr-tRNA-ligase_bac-type"/>
</dbReference>
<dbReference type="InterPro" id="IPR024108">
    <property type="entry name" value="Tyr-tRNA-ligase_bac_2"/>
</dbReference>
<dbReference type="NCBIfam" id="TIGR00234">
    <property type="entry name" value="tyrS"/>
    <property type="match status" value="1"/>
</dbReference>
<dbReference type="PANTHER" id="PTHR11766:SF1">
    <property type="entry name" value="TYROSINE--TRNA LIGASE"/>
    <property type="match status" value="1"/>
</dbReference>
<dbReference type="PANTHER" id="PTHR11766">
    <property type="entry name" value="TYROSYL-TRNA SYNTHETASE"/>
    <property type="match status" value="1"/>
</dbReference>
<dbReference type="Pfam" id="PF00579">
    <property type="entry name" value="tRNA-synt_1b"/>
    <property type="match status" value="1"/>
</dbReference>
<dbReference type="PRINTS" id="PR01040">
    <property type="entry name" value="TRNASYNTHTYR"/>
</dbReference>
<dbReference type="SUPFAM" id="SSF55174">
    <property type="entry name" value="Alpha-L RNA-binding motif"/>
    <property type="match status" value="1"/>
</dbReference>
<dbReference type="SUPFAM" id="SSF52374">
    <property type="entry name" value="Nucleotidylyl transferase"/>
    <property type="match status" value="1"/>
</dbReference>
<dbReference type="PROSITE" id="PS00178">
    <property type="entry name" value="AA_TRNA_LIGASE_I"/>
    <property type="match status" value="1"/>
</dbReference>
<dbReference type="PROSITE" id="PS50889">
    <property type="entry name" value="S4"/>
    <property type="match status" value="1"/>
</dbReference>
<reference key="1">
    <citation type="journal article" date="2000" name="Nature">
        <title>The genome sequence of the plant pathogen Xylella fastidiosa.</title>
        <authorList>
            <person name="Simpson A.J.G."/>
            <person name="Reinach F.C."/>
            <person name="Arruda P."/>
            <person name="Abreu F.A."/>
            <person name="Acencio M."/>
            <person name="Alvarenga R."/>
            <person name="Alves L.M.C."/>
            <person name="Araya J.E."/>
            <person name="Baia G.S."/>
            <person name="Baptista C.S."/>
            <person name="Barros M.H."/>
            <person name="Bonaccorsi E.D."/>
            <person name="Bordin S."/>
            <person name="Bove J.M."/>
            <person name="Briones M.R.S."/>
            <person name="Bueno M.R.P."/>
            <person name="Camargo A.A."/>
            <person name="Camargo L.E.A."/>
            <person name="Carraro D.M."/>
            <person name="Carrer H."/>
            <person name="Colauto N.B."/>
            <person name="Colombo C."/>
            <person name="Costa F.F."/>
            <person name="Costa M.C.R."/>
            <person name="Costa-Neto C.M."/>
            <person name="Coutinho L.L."/>
            <person name="Cristofani M."/>
            <person name="Dias-Neto E."/>
            <person name="Docena C."/>
            <person name="El-Dorry H."/>
            <person name="Facincani A.P."/>
            <person name="Ferreira A.J.S."/>
            <person name="Ferreira V.C.A."/>
            <person name="Ferro J.A."/>
            <person name="Fraga J.S."/>
            <person name="Franca S.C."/>
            <person name="Franco M.C."/>
            <person name="Frohme M."/>
            <person name="Furlan L.R."/>
            <person name="Garnier M."/>
            <person name="Goldman G.H."/>
            <person name="Goldman M.H.S."/>
            <person name="Gomes S.L."/>
            <person name="Gruber A."/>
            <person name="Ho P.L."/>
            <person name="Hoheisel J.D."/>
            <person name="Junqueira M.L."/>
            <person name="Kemper E.L."/>
            <person name="Kitajima J.P."/>
            <person name="Krieger J.E."/>
            <person name="Kuramae E.E."/>
            <person name="Laigret F."/>
            <person name="Lambais M.R."/>
            <person name="Leite L.C.C."/>
            <person name="Lemos E.G.M."/>
            <person name="Lemos M.V.F."/>
            <person name="Lopes S.A."/>
            <person name="Lopes C.R."/>
            <person name="Machado J.A."/>
            <person name="Machado M.A."/>
            <person name="Madeira A.M.B.N."/>
            <person name="Madeira H.M.F."/>
            <person name="Marino C.L."/>
            <person name="Marques M.V."/>
            <person name="Martins E.A.L."/>
            <person name="Martins E.M.F."/>
            <person name="Matsukuma A.Y."/>
            <person name="Menck C.F.M."/>
            <person name="Miracca E.C."/>
            <person name="Miyaki C.Y."/>
            <person name="Monteiro-Vitorello C.B."/>
            <person name="Moon D.H."/>
            <person name="Nagai M.A."/>
            <person name="Nascimento A.L.T.O."/>
            <person name="Netto L.E.S."/>
            <person name="Nhani A. Jr."/>
            <person name="Nobrega F.G."/>
            <person name="Nunes L.R."/>
            <person name="Oliveira M.A."/>
            <person name="de Oliveira M.C."/>
            <person name="de Oliveira R.C."/>
            <person name="Palmieri D.A."/>
            <person name="Paris A."/>
            <person name="Peixoto B.R."/>
            <person name="Pereira G.A.G."/>
            <person name="Pereira H.A. Jr."/>
            <person name="Pesquero J.B."/>
            <person name="Quaggio R.B."/>
            <person name="Roberto P.G."/>
            <person name="Rodrigues V."/>
            <person name="de Rosa A.J.M."/>
            <person name="de Rosa V.E. Jr."/>
            <person name="de Sa R.G."/>
            <person name="Santelli R.V."/>
            <person name="Sawasaki H.E."/>
            <person name="da Silva A.C.R."/>
            <person name="da Silva A.M."/>
            <person name="da Silva F.R."/>
            <person name="Silva W.A. Jr."/>
            <person name="da Silveira J.F."/>
            <person name="Silvestri M.L.Z."/>
            <person name="Siqueira W.J."/>
            <person name="de Souza A.A."/>
            <person name="de Souza A.P."/>
            <person name="Terenzi M.F."/>
            <person name="Truffi D."/>
            <person name="Tsai S.M."/>
            <person name="Tsuhako M.H."/>
            <person name="Vallada H."/>
            <person name="Van Sluys M.A."/>
            <person name="Verjovski-Almeida S."/>
            <person name="Vettore A.L."/>
            <person name="Zago M.A."/>
            <person name="Zatz M."/>
            <person name="Meidanis J."/>
            <person name="Setubal J.C."/>
        </authorList>
    </citation>
    <scope>NUCLEOTIDE SEQUENCE [LARGE SCALE GENOMIC DNA]</scope>
    <source>
        <strain>9a5c</strain>
    </source>
</reference>
<sequence length="418" mass="46592">MSLVSNSLALIERGANEILKFDELERRLRSGRPLRIKAGFDPTAPDLHLGHTVLLNKMRQFQELGHQVIFLIGDFTGMIGDPTGKNVTRKPLSHEDVLANARTYEDQVFKVLDRTLTEVRFNSEWFGKMSAVDMIKLAAQHTVARMLERDDFAKRFVSQQPIVIHEFLYPLIQGYDSIALRADVELGGTDQKFNLLMGRALQEHHGQPPQVVLTMPLLEGLDGVAKMSKSLGNYIGIKEPPIDIVTKTMKIGDDLMWRWIELLSFKISAAEVVALREAVAKSELNPREVKLRLAHELVSRFYDNAAAEKAIAGWQAVVTGQGNNNLLPLQKINVPADGVRLVALLTKSGLAPSNSEAMRKLKERAVRVDGIVVDDAHLHFVPGFEGLIQIGKRNFAKVRLVTSSESHDFPESNGIDKS</sequence>
<name>SYY_XYLFA</name>